<reference key="1">
    <citation type="journal article" date="2006" name="PLoS Biol.">
        <title>Metabolic complementarity and genomics of the dual bacterial symbiosis of sharpshooters.</title>
        <authorList>
            <person name="Wu D."/>
            <person name="Daugherty S.C."/>
            <person name="Van Aken S.E."/>
            <person name="Pai G.H."/>
            <person name="Watkins K.L."/>
            <person name="Khouri H."/>
            <person name="Tallon L.J."/>
            <person name="Zaborsky J.M."/>
            <person name="Dunbar H.E."/>
            <person name="Tran P.L."/>
            <person name="Moran N.A."/>
            <person name="Eisen J.A."/>
        </authorList>
    </citation>
    <scope>NUCLEOTIDE SEQUENCE [LARGE SCALE GENOMIC DNA]</scope>
</reference>
<dbReference type="EMBL" id="CP000238">
    <property type="protein sequence ID" value="ABF13904.1"/>
    <property type="molecule type" value="Genomic_DNA"/>
</dbReference>
<dbReference type="RefSeq" id="WP_011520714.1">
    <property type="nucleotide sequence ID" value="NC_007984.1"/>
</dbReference>
<dbReference type="SMR" id="Q1LST3"/>
<dbReference type="STRING" id="374463.BCI_0552"/>
<dbReference type="KEGG" id="bci:BCI_0552"/>
<dbReference type="HOGENOM" id="CLU_005965_2_1_6"/>
<dbReference type="OrthoDB" id="9766019at2"/>
<dbReference type="Proteomes" id="UP000002427">
    <property type="component" value="Chromosome"/>
</dbReference>
<dbReference type="GO" id="GO:0005524">
    <property type="term" value="F:ATP binding"/>
    <property type="evidence" value="ECO:0007669"/>
    <property type="project" value="UniProtKB-UniRule"/>
</dbReference>
<dbReference type="GO" id="GO:0140662">
    <property type="term" value="F:ATP-dependent protein folding chaperone"/>
    <property type="evidence" value="ECO:0007669"/>
    <property type="project" value="InterPro"/>
</dbReference>
<dbReference type="GO" id="GO:0051082">
    <property type="term" value="F:unfolded protein binding"/>
    <property type="evidence" value="ECO:0007669"/>
    <property type="project" value="InterPro"/>
</dbReference>
<dbReference type="CDD" id="cd10234">
    <property type="entry name" value="ASKHA_NBD_HSP70_DnaK-like"/>
    <property type="match status" value="1"/>
</dbReference>
<dbReference type="FunFam" id="2.60.34.10:FF:000014">
    <property type="entry name" value="Chaperone protein DnaK HSP70"/>
    <property type="match status" value="1"/>
</dbReference>
<dbReference type="FunFam" id="3.30.30.30:FF:000003">
    <property type="entry name" value="Heat shock protein 9"/>
    <property type="match status" value="1"/>
</dbReference>
<dbReference type="FunFam" id="1.20.1270.10:FF:000001">
    <property type="entry name" value="Molecular chaperone DnaK"/>
    <property type="match status" value="1"/>
</dbReference>
<dbReference type="FunFam" id="3.30.420.40:FF:000004">
    <property type="entry name" value="Molecular chaperone DnaK"/>
    <property type="match status" value="1"/>
</dbReference>
<dbReference type="FunFam" id="3.90.640.10:FF:000003">
    <property type="entry name" value="Molecular chaperone DnaK"/>
    <property type="match status" value="1"/>
</dbReference>
<dbReference type="Gene3D" id="1.20.1270.10">
    <property type="match status" value="1"/>
</dbReference>
<dbReference type="Gene3D" id="3.30.420.40">
    <property type="match status" value="2"/>
</dbReference>
<dbReference type="Gene3D" id="3.90.640.10">
    <property type="entry name" value="Actin, Chain A, domain 4"/>
    <property type="match status" value="1"/>
</dbReference>
<dbReference type="Gene3D" id="2.60.34.10">
    <property type="entry name" value="Substrate Binding Domain Of DNAk, Chain A, domain 1"/>
    <property type="match status" value="1"/>
</dbReference>
<dbReference type="HAMAP" id="MF_00332">
    <property type="entry name" value="DnaK"/>
    <property type="match status" value="1"/>
</dbReference>
<dbReference type="InterPro" id="IPR043129">
    <property type="entry name" value="ATPase_NBD"/>
</dbReference>
<dbReference type="InterPro" id="IPR012725">
    <property type="entry name" value="Chaperone_DnaK"/>
</dbReference>
<dbReference type="InterPro" id="IPR018181">
    <property type="entry name" value="Heat_shock_70_CS"/>
</dbReference>
<dbReference type="InterPro" id="IPR029048">
    <property type="entry name" value="HSP70_C_sf"/>
</dbReference>
<dbReference type="InterPro" id="IPR029047">
    <property type="entry name" value="HSP70_peptide-bd_sf"/>
</dbReference>
<dbReference type="InterPro" id="IPR013126">
    <property type="entry name" value="Hsp_70_fam"/>
</dbReference>
<dbReference type="NCBIfam" id="NF001413">
    <property type="entry name" value="PRK00290.1"/>
    <property type="match status" value="1"/>
</dbReference>
<dbReference type="NCBIfam" id="NF003520">
    <property type="entry name" value="PRK05183.1"/>
    <property type="match status" value="1"/>
</dbReference>
<dbReference type="NCBIfam" id="TIGR02350">
    <property type="entry name" value="prok_dnaK"/>
    <property type="match status" value="1"/>
</dbReference>
<dbReference type="PANTHER" id="PTHR19375">
    <property type="entry name" value="HEAT SHOCK PROTEIN 70KDA"/>
    <property type="match status" value="1"/>
</dbReference>
<dbReference type="Pfam" id="PF00012">
    <property type="entry name" value="HSP70"/>
    <property type="match status" value="1"/>
</dbReference>
<dbReference type="PRINTS" id="PR00301">
    <property type="entry name" value="HEATSHOCK70"/>
</dbReference>
<dbReference type="SUPFAM" id="SSF53067">
    <property type="entry name" value="Actin-like ATPase domain"/>
    <property type="match status" value="2"/>
</dbReference>
<dbReference type="SUPFAM" id="SSF100920">
    <property type="entry name" value="Heat shock protein 70kD (HSP70), peptide-binding domain"/>
    <property type="match status" value="1"/>
</dbReference>
<dbReference type="PROSITE" id="PS00297">
    <property type="entry name" value="HSP70_1"/>
    <property type="match status" value="1"/>
</dbReference>
<dbReference type="PROSITE" id="PS00329">
    <property type="entry name" value="HSP70_2"/>
    <property type="match status" value="1"/>
</dbReference>
<dbReference type="PROSITE" id="PS01036">
    <property type="entry name" value="HSP70_3"/>
    <property type="match status" value="1"/>
</dbReference>
<evidence type="ECO:0000255" key="1">
    <source>
        <dbReference type="HAMAP-Rule" id="MF_00332"/>
    </source>
</evidence>
<protein>
    <recommendedName>
        <fullName evidence="1">Chaperone protein DnaK</fullName>
    </recommendedName>
    <alternativeName>
        <fullName evidence="1">HSP70</fullName>
    </alternativeName>
    <alternativeName>
        <fullName evidence="1">Heat shock 70 kDa protein</fullName>
    </alternativeName>
    <alternativeName>
        <fullName evidence="1">Heat shock protein 70</fullName>
    </alternativeName>
</protein>
<comment type="function">
    <text evidence="1">Acts as a chaperone.</text>
</comment>
<comment type="induction">
    <text evidence="1">By stress conditions e.g. heat shock.</text>
</comment>
<comment type="similarity">
    <text evidence="1">Belongs to the heat shock protein 70 family.</text>
</comment>
<sequence length="631" mass="69030">MGKIIGIDLGTTNSCIAIVEGTKTRVLENSEGDRTTPSIVAYTQDGEILVGQPAKRQSATNPKNTLFAIKRLIGRRFEDEEVQRDVDIMPYKIIAADNGDAWLEIKGQKIAPPQVSAEILKKMKKTAEDYLGESVTEAVITVPAYFNDTQRQATKDAGRIAGLEVKRIINEPTAAALAYGLDKEIGNRTIAVYDLGGGTFDISIIEIDDVDGEKTFEVLATNGDTHLGGEDFDSRLINYLVDEFKKDQGIDLRNDPLAMQRLKEAAEKAKIELSAAQQTDVNLPYITADSTGPKHMNLKITRAKLESLVEDLVNRTMDPLKVALTDASLSISDIKDVILVGGQTRMPLVQKKVTDFFCKEPRKDVNPDEAVAIGAAVQGGVLSGNVKDVLLLDVTPLSLGIETMGGVMTALIAKNTTIPTKHSQIFSTAEDNQSAVTIHVLQGERKRAMDNKSLGQFNLDGIAPAMRGIPQIEVTFDIDADGILHVSAKDNNSGREQKITIKASSGLSEEEIKKMVREAEANAESDRKFEELVQTRNQADNLMHSTRKQLAEYGNQLLQEDRNAIENAIQSLNTALKGESKTDIETNIQSLIQVSSKLLKLTQQQNQATNDNVKTDGNVVDAEFEEVKDKK</sequence>
<gene>
    <name evidence="1" type="primary">dnaK</name>
    <name type="ordered locus">BCI_0552</name>
</gene>
<organism>
    <name type="scientific">Baumannia cicadellinicola subsp. Homalodisca coagulata</name>
    <dbReference type="NCBI Taxonomy" id="374463"/>
    <lineage>
        <taxon>Bacteria</taxon>
        <taxon>Pseudomonadati</taxon>
        <taxon>Pseudomonadota</taxon>
        <taxon>Gammaproteobacteria</taxon>
        <taxon>Candidatus Palibaumannia</taxon>
    </lineage>
</organism>
<accession>Q1LST3</accession>
<proteinExistence type="inferred from homology"/>
<name>DNAK_BAUCH</name>
<keyword id="KW-0067">ATP-binding</keyword>
<keyword id="KW-0143">Chaperone</keyword>
<keyword id="KW-0547">Nucleotide-binding</keyword>
<keyword id="KW-0597">Phosphoprotein</keyword>
<keyword id="KW-1185">Reference proteome</keyword>
<keyword id="KW-0346">Stress response</keyword>
<feature type="chain" id="PRO_1000059513" description="Chaperone protein DnaK">
    <location>
        <begin position="1"/>
        <end position="631"/>
    </location>
</feature>
<feature type="modified residue" description="Phosphothreonine; by autocatalysis" evidence="1">
    <location>
        <position position="199"/>
    </location>
</feature>